<organism>
    <name type="scientific">Aster yellows witches'-broom phytoplasma (strain AYWB)</name>
    <dbReference type="NCBI Taxonomy" id="322098"/>
    <lineage>
        <taxon>Bacteria</taxon>
        <taxon>Bacillati</taxon>
        <taxon>Mycoplasmatota</taxon>
        <taxon>Mollicutes</taxon>
        <taxon>Acholeplasmatales</taxon>
        <taxon>Acholeplasmataceae</taxon>
        <taxon>Candidatus Phytoplasma</taxon>
        <taxon>16SrI (Aster yellows group)</taxon>
    </lineage>
</organism>
<protein>
    <recommendedName>
        <fullName evidence="1">Small ribosomal subunit protein uS9</fullName>
    </recommendedName>
    <alternativeName>
        <fullName evidence="2">30S ribosomal protein S9</fullName>
    </alternativeName>
</protein>
<gene>
    <name evidence="1" type="primary">rpsI</name>
    <name type="ordered locus">AYWB_581</name>
</gene>
<evidence type="ECO:0000255" key="1">
    <source>
        <dbReference type="HAMAP-Rule" id="MF_00532"/>
    </source>
</evidence>
<evidence type="ECO:0000305" key="2"/>
<dbReference type="EMBL" id="CP000061">
    <property type="protein sequence ID" value="ABC65698.1"/>
    <property type="molecule type" value="Genomic_DNA"/>
</dbReference>
<dbReference type="RefSeq" id="WP_011412860.1">
    <property type="nucleotide sequence ID" value="NC_007716.1"/>
</dbReference>
<dbReference type="SMR" id="Q2NIP5"/>
<dbReference type="STRING" id="322098.AYWB_581"/>
<dbReference type="KEGG" id="ayw:AYWB_581"/>
<dbReference type="eggNOG" id="COG0103">
    <property type="taxonomic scope" value="Bacteria"/>
</dbReference>
<dbReference type="HOGENOM" id="CLU_046483_2_1_14"/>
<dbReference type="OrthoDB" id="9803965at2"/>
<dbReference type="PhylomeDB" id="Q2NIP5"/>
<dbReference type="Proteomes" id="UP000001934">
    <property type="component" value="Chromosome"/>
</dbReference>
<dbReference type="GO" id="GO:0022627">
    <property type="term" value="C:cytosolic small ribosomal subunit"/>
    <property type="evidence" value="ECO:0007669"/>
    <property type="project" value="TreeGrafter"/>
</dbReference>
<dbReference type="GO" id="GO:0003723">
    <property type="term" value="F:RNA binding"/>
    <property type="evidence" value="ECO:0007669"/>
    <property type="project" value="TreeGrafter"/>
</dbReference>
<dbReference type="GO" id="GO:0003735">
    <property type="term" value="F:structural constituent of ribosome"/>
    <property type="evidence" value="ECO:0007669"/>
    <property type="project" value="InterPro"/>
</dbReference>
<dbReference type="GO" id="GO:0006412">
    <property type="term" value="P:translation"/>
    <property type="evidence" value="ECO:0007669"/>
    <property type="project" value="UniProtKB-UniRule"/>
</dbReference>
<dbReference type="FunFam" id="3.30.230.10:FF:000001">
    <property type="entry name" value="30S ribosomal protein S9"/>
    <property type="match status" value="1"/>
</dbReference>
<dbReference type="Gene3D" id="3.30.230.10">
    <property type="match status" value="1"/>
</dbReference>
<dbReference type="HAMAP" id="MF_00532_B">
    <property type="entry name" value="Ribosomal_uS9_B"/>
    <property type="match status" value="1"/>
</dbReference>
<dbReference type="InterPro" id="IPR020568">
    <property type="entry name" value="Ribosomal_Su5_D2-typ_SF"/>
</dbReference>
<dbReference type="InterPro" id="IPR000754">
    <property type="entry name" value="Ribosomal_uS9"/>
</dbReference>
<dbReference type="InterPro" id="IPR023035">
    <property type="entry name" value="Ribosomal_uS9_bac/plastid"/>
</dbReference>
<dbReference type="InterPro" id="IPR020574">
    <property type="entry name" value="Ribosomal_uS9_CS"/>
</dbReference>
<dbReference type="InterPro" id="IPR014721">
    <property type="entry name" value="Ribsml_uS5_D2-typ_fold_subgr"/>
</dbReference>
<dbReference type="NCBIfam" id="NF001099">
    <property type="entry name" value="PRK00132.1"/>
    <property type="match status" value="1"/>
</dbReference>
<dbReference type="PANTHER" id="PTHR21569">
    <property type="entry name" value="RIBOSOMAL PROTEIN S9"/>
    <property type="match status" value="1"/>
</dbReference>
<dbReference type="PANTHER" id="PTHR21569:SF1">
    <property type="entry name" value="SMALL RIBOSOMAL SUBUNIT PROTEIN US9M"/>
    <property type="match status" value="1"/>
</dbReference>
<dbReference type="Pfam" id="PF00380">
    <property type="entry name" value="Ribosomal_S9"/>
    <property type="match status" value="1"/>
</dbReference>
<dbReference type="SUPFAM" id="SSF54211">
    <property type="entry name" value="Ribosomal protein S5 domain 2-like"/>
    <property type="match status" value="1"/>
</dbReference>
<dbReference type="PROSITE" id="PS00360">
    <property type="entry name" value="RIBOSOMAL_S9"/>
    <property type="match status" value="1"/>
</dbReference>
<proteinExistence type="inferred from homology"/>
<sequence length="130" mass="14513">MKKVNYFGTGRRKSSVARVILTNGTGKITINTRDFEKYLPLPATRLEMIQPLELTEKREVFDVSVNVNGGGLSAQAGAIRLGIARALIESIPELRAILKKSGLLTRDARCVERKKYGLKKARRAPQFSKR</sequence>
<accession>Q2NIP5</accession>
<keyword id="KW-0687">Ribonucleoprotein</keyword>
<keyword id="KW-0689">Ribosomal protein</keyword>
<reference key="1">
    <citation type="journal article" date="2006" name="J. Bacteriol.">
        <title>Living with genome instability: the adaptation of phytoplasmas to diverse environments of their insect and plant hosts.</title>
        <authorList>
            <person name="Bai X."/>
            <person name="Zhang J."/>
            <person name="Ewing A."/>
            <person name="Miller S.A."/>
            <person name="Jancso Radek A."/>
            <person name="Shevchenko D.V."/>
            <person name="Tsukerman K."/>
            <person name="Walunas T."/>
            <person name="Lapidus A."/>
            <person name="Campbell J.W."/>
            <person name="Hogenhout S.A."/>
        </authorList>
    </citation>
    <scope>NUCLEOTIDE SEQUENCE [LARGE SCALE GENOMIC DNA]</scope>
    <source>
        <strain>AYWB</strain>
    </source>
</reference>
<comment type="similarity">
    <text evidence="1">Belongs to the universal ribosomal protein uS9 family.</text>
</comment>
<feature type="chain" id="PRO_1000051157" description="Small ribosomal subunit protein uS9">
    <location>
        <begin position="1"/>
        <end position="130"/>
    </location>
</feature>
<name>RS9_AYWBP</name>